<sequence>MMRTNYCGQLNSSHVGQEVTLCGWVNRRRDLGGLIFIDMRDREGLVQVFFDPDRQDAFKLASELRNEFCIQLTGVVRARPESQINKDMATGEVEIFANALTIVNRSEALPLDSNQTNTEEARLKFRYLDLRRPEMAQRLKTRARITSFVRRFMDDHGFMDIETPMLTKATPEGARDYLVPSRVHKGKFYALPQSPQLFKQLLMMSGFDRYYQIVKCFRDEDLRADRQPEFTQIDVETSFMTAPQVREVMEQLVRELWLDVKGVDLGDFPVMTFAEAMRRFGSDKPDLRNPLELVDVADLLKDIEFKVFSGPANDAKGRVAAIRVPGGSQLSRKQIDEYGKFIEIYGAKGLAYIKVNERAKGLEGVQSPVAKFLSEDVLSALLDRTAAQDGDILFFGADSAKVVTDALGALRLKLGRDLNLTKNNSWEPLWVVDFPMFEEDGEGGLSAMHHPFTAPRDMLPSELAANPVSAIANAYDMVINGYEVGGGSVRIHSGEMQQTVFRILGITEQEQREKFGFLLDALKYGTPPHAGLAFGLDRLVMLLTGTDNIRDVIAFPKTTAAACLMTEAPSFANPASLEELAIAVVVKGKAAQDGKSENE</sequence>
<proteinExistence type="inferred from homology"/>
<reference key="1">
    <citation type="journal article" date="2004" name="Proc. Natl. Acad. Sci. U.S.A.">
        <title>Genome sequence of the enterobacterial phytopathogen Erwinia carotovora subsp. atroseptica and characterization of virulence factors.</title>
        <authorList>
            <person name="Bell K.S."/>
            <person name="Sebaihia M."/>
            <person name="Pritchard L."/>
            <person name="Holden M.T.G."/>
            <person name="Hyman L.J."/>
            <person name="Holeva M.C."/>
            <person name="Thomson N.R."/>
            <person name="Bentley S.D."/>
            <person name="Churcher L.J.C."/>
            <person name="Mungall K."/>
            <person name="Atkin R."/>
            <person name="Bason N."/>
            <person name="Brooks K."/>
            <person name="Chillingworth T."/>
            <person name="Clark K."/>
            <person name="Doggett J."/>
            <person name="Fraser A."/>
            <person name="Hance Z."/>
            <person name="Hauser H."/>
            <person name="Jagels K."/>
            <person name="Moule S."/>
            <person name="Norbertczak H."/>
            <person name="Ormond D."/>
            <person name="Price C."/>
            <person name="Quail M.A."/>
            <person name="Sanders M."/>
            <person name="Walker D."/>
            <person name="Whitehead S."/>
            <person name="Salmond G.P.C."/>
            <person name="Birch P.R.J."/>
            <person name="Parkhill J."/>
            <person name="Toth I.K."/>
        </authorList>
    </citation>
    <scope>NUCLEOTIDE SEQUENCE [LARGE SCALE GENOMIC DNA]</scope>
    <source>
        <strain>SCRI 1043 / ATCC BAA-672</strain>
    </source>
</reference>
<name>SYD_PECAS</name>
<feature type="chain" id="PRO_0000110872" description="Aspartate--tRNA ligase">
    <location>
        <begin position="1"/>
        <end position="599"/>
    </location>
</feature>
<feature type="region of interest" description="Aspartate" evidence="1">
    <location>
        <begin position="196"/>
        <end position="199"/>
    </location>
</feature>
<feature type="binding site" evidence="1">
    <location>
        <position position="172"/>
    </location>
    <ligand>
        <name>L-aspartate</name>
        <dbReference type="ChEBI" id="CHEBI:29991"/>
    </ligand>
</feature>
<feature type="binding site" evidence="1">
    <location>
        <begin position="218"/>
        <end position="220"/>
    </location>
    <ligand>
        <name>ATP</name>
        <dbReference type="ChEBI" id="CHEBI:30616"/>
    </ligand>
</feature>
<feature type="binding site" evidence="1">
    <location>
        <position position="218"/>
    </location>
    <ligand>
        <name>L-aspartate</name>
        <dbReference type="ChEBI" id="CHEBI:29991"/>
    </ligand>
</feature>
<feature type="binding site" evidence="1">
    <location>
        <position position="227"/>
    </location>
    <ligand>
        <name>ATP</name>
        <dbReference type="ChEBI" id="CHEBI:30616"/>
    </ligand>
</feature>
<feature type="binding site" evidence="1">
    <location>
        <position position="449"/>
    </location>
    <ligand>
        <name>L-aspartate</name>
        <dbReference type="ChEBI" id="CHEBI:29991"/>
    </ligand>
</feature>
<feature type="binding site" evidence="1">
    <location>
        <position position="483"/>
    </location>
    <ligand>
        <name>ATP</name>
        <dbReference type="ChEBI" id="CHEBI:30616"/>
    </ligand>
</feature>
<feature type="binding site" evidence="1">
    <location>
        <position position="490"/>
    </location>
    <ligand>
        <name>L-aspartate</name>
        <dbReference type="ChEBI" id="CHEBI:29991"/>
    </ligand>
</feature>
<feature type="binding site" evidence="1">
    <location>
        <begin position="535"/>
        <end position="538"/>
    </location>
    <ligand>
        <name>ATP</name>
        <dbReference type="ChEBI" id="CHEBI:30616"/>
    </ligand>
</feature>
<gene>
    <name evidence="1" type="primary">aspS</name>
    <name type="ordered locus">ECA2496</name>
</gene>
<organism>
    <name type="scientific">Pectobacterium atrosepticum (strain SCRI 1043 / ATCC BAA-672)</name>
    <name type="common">Erwinia carotovora subsp. atroseptica</name>
    <dbReference type="NCBI Taxonomy" id="218491"/>
    <lineage>
        <taxon>Bacteria</taxon>
        <taxon>Pseudomonadati</taxon>
        <taxon>Pseudomonadota</taxon>
        <taxon>Gammaproteobacteria</taxon>
        <taxon>Enterobacterales</taxon>
        <taxon>Pectobacteriaceae</taxon>
        <taxon>Pectobacterium</taxon>
    </lineage>
</organism>
<accession>Q6D497</accession>
<dbReference type="EC" id="6.1.1.12" evidence="1"/>
<dbReference type="EMBL" id="BX950851">
    <property type="protein sequence ID" value="CAG75396.1"/>
    <property type="molecule type" value="Genomic_DNA"/>
</dbReference>
<dbReference type="SMR" id="Q6D497"/>
<dbReference type="STRING" id="218491.ECA2496"/>
<dbReference type="KEGG" id="eca:ECA2496"/>
<dbReference type="eggNOG" id="COG0173">
    <property type="taxonomic scope" value="Bacteria"/>
</dbReference>
<dbReference type="HOGENOM" id="CLU_014330_3_2_6"/>
<dbReference type="Proteomes" id="UP000007966">
    <property type="component" value="Chromosome"/>
</dbReference>
<dbReference type="GO" id="GO:0005737">
    <property type="term" value="C:cytoplasm"/>
    <property type="evidence" value="ECO:0007669"/>
    <property type="project" value="UniProtKB-SubCell"/>
</dbReference>
<dbReference type="GO" id="GO:0004815">
    <property type="term" value="F:aspartate-tRNA ligase activity"/>
    <property type="evidence" value="ECO:0007669"/>
    <property type="project" value="UniProtKB-UniRule"/>
</dbReference>
<dbReference type="GO" id="GO:0005524">
    <property type="term" value="F:ATP binding"/>
    <property type="evidence" value="ECO:0007669"/>
    <property type="project" value="UniProtKB-UniRule"/>
</dbReference>
<dbReference type="GO" id="GO:0003676">
    <property type="term" value="F:nucleic acid binding"/>
    <property type="evidence" value="ECO:0007669"/>
    <property type="project" value="InterPro"/>
</dbReference>
<dbReference type="GO" id="GO:0006422">
    <property type="term" value="P:aspartyl-tRNA aminoacylation"/>
    <property type="evidence" value="ECO:0007669"/>
    <property type="project" value="UniProtKB-UniRule"/>
</dbReference>
<dbReference type="CDD" id="cd00777">
    <property type="entry name" value="AspRS_core"/>
    <property type="match status" value="1"/>
</dbReference>
<dbReference type="CDD" id="cd04317">
    <property type="entry name" value="EcAspRS_like_N"/>
    <property type="match status" value="1"/>
</dbReference>
<dbReference type="FunFam" id="2.40.50.140:FF:000080">
    <property type="entry name" value="Aspartate--tRNA ligase"/>
    <property type="match status" value="1"/>
</dbReference>
<dbReference type="Gene3D" id="3.30.930.10">
    <property type="entry name" value="Bira Bifunctional Protein, Domain 2"/>
    <property type="match status" value="1"/>
</dbReference>
<dbReference type="Gene3D" id="3.30.1360.30">
    <property type="entry name" value="GAD-like domain"/>
    <property type="match status" value="1"/>
</dbReference>
<dbReference type="Gene3D" id="2.40.50.140">
    <property type="entry name" value="Nucleic acid-binding proteins"/>
    <property type="match status" value="1"/>
</dbReference>
<dbReference type="HAMAP" id="MF_00044">
    <property type="entry name" value="Asp_tRNA_synth_type1"/>
    <property type="match status" value="1"/>
</dbReference>
<dbReference type="InterPro" id="IPR004364">
    <property type="entry name" value="Aa-tRNA-synt_II"/>
</dbReference>
<dbReference type="InterPro" id="IPR006195">
    <property type="entry name" value="aa-tRNA-synth_II"/>
</dbReference>
<dbReference type="InterPro" id="IPR045864">
    <property type="entry name" value="aa-tRNA-synth_II/BPL/LPL"/>
</dbReference>
<dbReference type="InterPro" id="IPR004524">
    <property type="entry name" value="Asp-tRNA-ligase_1"/>
</dbReference>
<dbReference type="InterPro" id="IPR047089">
    <property type="entry name" value="Asp-tRNA-ligase_1_N"/>
</dbReference>
<dbReference type="InterPro" id="IPR002312">
    <property type="entry name" value="Asp/Asn-tRNA-synth_IIb"/>
</dbReference>
<dbReference type="InterPro" id="IPR047090">
    <property type="entry name" value="AspRS_core"/>
</dbReference>
<dbReference type="InterPro" id="IPR004115">
    <property type="entry name" value="GAD-like_sf"/>
</dbReference>
<dbReference type="InterPro" id="IPR029351">
    <property type="entry name" value="GAD_dom"/>
</dbReference>
<dbReference type="InterPro" id="IPR012340">
    <property type="entry name" value="NA-bd_OB-fold"/>
</dbReference>
<dbReference type="InterPro" id="IPR004365">
    <property type="entry name" value="NA-bd_OB_tRNA"/>
</dbReference>
<dbReference type="NCBIfam" id="TIGR00459">
    <property type="entry name" value="aspS_bact"/>
    <property type="match status" value="1"/>
</dbReference>
<dbReference type="NCBIfam" id="NF001750">
    <property type="entry name" value="PRK00476.1"/>
    <property type="match status" value="1"/>
</dbReference>
<dbReference type="PANTHER" id="PTHR22594:SF5">
    <property type="entry name" value="ASPARTATE--TRNA LIGASE, MITOCHONDRIAL"/>
    <property type="match status" value="1"/>
</dbReference>
<dbReference type="PANTHER" id="PTHR22594">
    <property type="entry name" value="ASPARTYL/LYSYL-TRNA SYNTHETASE"/>
    <property type="match status" value="1"/>
</dbReference>
<dbReference type="Pfam" id="PF02938">
    <property type="entry name" value="GAD"/>
    <property type="match status" value="1"/>
</dbReference>
<dbReference type="Pfam" id="PF00152">
    <property type="entry name" value="tRNA-synt_2"/>
    <property type="match status" value="1"/>
</dbReference>
<dbReference type="Pfam" id="PF01336">
    <property type="entry name" value="tRNA_anti-codon"/>
    <property type="match status" value="1"/>
</dbReference>
<dbReference type="PRINTS" id="PR01042">
    <property type="entry name" value="TRNASYNTHASP"/>
</dbReference>
<dbReference type="SUPFAM" id="SSF55681">
    <property type="entry name" value="Class II aaRS and biotin synthetases"/>
    <property type="match status" value="1"/>
</dbReference>
<dbReference type="SUPFAM" id="SSF55261">
    <property type="entry name" value="GAD domain-like"/>
    <property type="match status" value="1"/>
</dbReference>
<dbReference type="SUPFAM" id="SSF50249">
    <property type="entry name" value="Nucleic acid-binding proteins"/>
    <property type="match status" value="1"/>
</dbReference>
<dbReference type="PROSITE" id="PS50862">
    <property type="entry name" value="AA_TRNA_LIGASE_II"/>
    <property type="match status" value="1"/>
</dbReference>
<comment type="function">
    <text evidence="1">Catalyzes the attachment of L-aspartate to tRNA(Asp) in a two-step reaction: L-aspartate is first activated by ATP to form Asp-AMP and then transferred to the acceptor end of tRNA(Asp).</text>
</comment>
<comment type="catalytic activity">
    <reaction evidence="1">
        <text>tRNA(Asp) + L-aspartate + ATP = L-aspartyl-tRNA(Asp) + AMP + diphosphate</text>
        <dbReference type="Rhea" id="RHEA:19649"/>
        <dbReference type="Rhea" id="RHEA-COMP:9660"/>
        <dbReference type="Rhea" id="RHEA-COMP:9678"/>
        <dbReference type="ChEBI" id="CHEBI:29991"/>
        <dbReference type="ChEBI" id="CHEBI:30616"/>
        <dbReference type="ChEBI" id="CHEBI:33019"/>
        <dbReference type="ChEBI" id="CHEBI:78442"/>
        <dbReference type="ChEBI" id="CHEBI:78516"/>
        <dbReference type="ChEBI" id="CHEBI:456215"/>
        <dbReference type="EC" id="6.1.1.12"/>
    </reaction>
</comment>
<comment type="subunit">
    <text evidence="1">Homodimer.</text>
</comment>
<comment type="subcellular location">
    <subcellularLocation>
        <location evidence="1">Cytoplasm</location>
    </subcellularLocation>
</comment>
<comment type="similarity">
    <text evidence="1">Belongs to the class-II aminoacyl-tRNA synthetase family. Type 1 subfamily.</text>
</comment>
<keyword id="KW-0030">Aminoacyl-tRNA synthetase</keyword>
<keyword id="KW-0067">ATP-binding</keyword>
<keyword id="KW-0963">Cytoplasm</keyword>
<keyword id="KW-0436">Ligase</keyword>
<keyword id="KW-0547">Nucleotide-binding</keyword>
<keyword id="KW-0648">Protein biosynthesis</keyword>
<keyword id="KW-1185">Reference proteome</keyword>
<evidence type="ECO:0000255" key="1">
    <source>
        <dbReference type="HAMAP-Rule" id="MF_00044"/>
    </source>
</evidence>
<protein>
    <recommendedName>
        <fullName evidence="1">Aspartate--tRNA ligase</fullName>
        <ecNumber evidence="1">6.1.1.12</ecNumber>
    </recommendedName>
    <alternativeName>
        <fullName evidence="1">Aspartyl-tRNA synthetase</fullName>
        <shortName evidence="1">AspRS</shortName>
    </alternativeName>
</protein>